<comment type="function">
    <text evidence="1">This protein binds to 23S rRNA in the presence of protein L20.</text>
</comment>
<comment type="subunit">
    <text evidence="1">Part of the 50S ribosomal subunit. Contacts protein L20.</text>
</comment>
<comment type="similarity">
    <text evidence="1">Belongs to the bacterial ribosomal protein bL21 family.</text>
</comment>
<dbReference type="EMBL" id="CP000247">
    <property type="protein sequence ID" value="ABG71255.1"/>
    <property type="molecule type" value="Genomic_DNA"/>
</dbReference>
<dbReference type="RefSeq" id="WP_000271401.1">
    <property type="nucleotide sequence ID" value="NC_008253.1"/>
</dbReference>
<dbReference type="SMR" id="Q0TCS4"/>
<dbReference type="GeneID" id="93778795"/>
<dbReference type="KEGG" id="ecp:ECP_3273"/>
<dbReference type="HOGENOM" id="CLU_061463_3_3_6"/>
<dbReference type="Proteomes" id="UP000009182">
    <property type="component" value="Chromosome"/>
</dbReference>
<dbReference type="GO" id="GO:0005737">
    <property type="term" value="C:cytoplasm"/>
    <property type="evidence" value="ECO:0007669"/>
    <property type="project" value="UniProtKB-ARBA"/>
</dbReference>
<dbReference type="GO" id="GO:1990904">
    <property type="term" value="C:ribonucleoprotein complex"/>
    <property type="evidence" value="ECO:0007669"/>
    <property type="project" value="UniProtKB-KW"/>
</dbReference>
<dbReference type="GO" id="GO:0005840">
    <property type="term" value="C:ribosome"/>
    <property type="evidence" value="ECO:0007669"/>
    <property type="project" value="UniProtKB-KW"/>
</dbReference>
<dbReference type="GO" id="GO:0019843">
    <property type="term" value="F:rRNA binding"/>
    <property type="evidence" value="ECO:0007669"/>
    <property type="project" value="UniProtKB-UniRule"/>
</dbReference>
<dbReference type="GO" id="GO:0003735">
    <property type="term" value="F:structural constituent of ribosome"/>
    <property type="evidence" value="ECO:0007669"/>
    <property type="project" value="InterPro"/>
</dbReference>
<dbReference type="GO" id="GO:0006412">
    <property type="term" value="P:translation"/>
    <property type="evidence" value="ECO:0007669"/>
    <property type="project" value="UniProtKB-UniRule"/>
</dbReference>
<dbReference type="HAMAP" id="MF_01363">
    <property type="entry name" value="Ribosomal_bL21"/>
    <property type="match status" value="1"/>
</dbReference>
<dbReference type="InterPro" id="IPR028909">
    <property type="entry name" value="bL21-like"/>
</dbReference>
<dbReference type="InterPro" id="IPR036164">
    <property type="entry name" value="bL21-like_sf"/>
</dbReference>
<dbReference type="InterPro" id="IPR001787">
    <property type="entry name" value="Ribosomal_bL21"/>
</dbReference>
<dbReference type="InterPro" id="IPR018258">
    <property type="entry name" value="Ribosomal_bL21_CS"/>
</dbReference>
<dbReference type="NCBIfam" id="TIGR00061">
    <property type="entry name" value="L21"/>
    <property type="match status" value="1"/>
</dbReference>
<dbReference type="PANTHER" id="PTHR21349">
    <property type="entry name" value="50S RIBOSOMAL PROTEIN L21"/>
    <property type="match status" value="1"/>
</dbReference>
<dbReference type="PANTHER" id="PTHR21349:SF0">
    <property type="entry name" value="LARGE RIBOSOMAL SUBUNIT PROTEIN BL21M"/>
    <property type="match status" value="1"/>
</dbReference>
<dbReference type="Pfam" id="PF00829">
    <property type="entry name" value="Ribosomal_L21p"/>
    <property type="match status" value="1"/>
</dbReference>
<dbReference type="SUPFAM" id="SSF141091">
    <property type="entry name" value="L21p-like"/>
    <property type="match status" value="1"/>
</dbReference>
<dbReference type="PROSITE" id="PS01169">
    <property type="entry name" value="RIBOSOMAL_L21"/>
    <property type="match status" value="1"/>
</dbReference>
<feature type="chain" id="PRO_0000269318" description="Large ribosomal subunit protein bL21">
    <location>
        <begin position="1"/>
        <end position="103"/>
    </location>
</feature>
<gene>
    <name evidence="1" type="primary">rplU</name>
    <name type="ordered locus">ECP_3273</name>
</gene>
<proteinExistence type="inferred from homology"/>
<protein>
    <recommendedName>
        <fullName evidence="1">Large ribosomal subunit protein bL21</fullName>
    </recommendedName>
    <alternativeName>
        <fullName evidence="2">50S ribosomal protein L21</fullName>
    </alternativeName>
</protein>
<name>RL21_ECOL5</name>
<accession>Q0TCS4</accession>
<organism>
    <name type="scientific">Escherichia coli O6:K15:H31 (strain 536 / UPEC)</name>
    <dbReference type="NCBI Taxonomy" id="362663"/>
    <lineage>
        <taxon>Bacteria</taxon>
        <taxon>Pseudomonadati</taxon>
        <taxon>Pseudomonadota</taxon>
        <taxon>Gammaproteobacteria</taxon>
        <taxon>Enterobacterales</taxon>
        <taxon>Enterobacteriaceae</taxon>
        <taxon>Escherichia</taxon>
    </lineage>
</organism>
<reference key="1">
    <citation type="journal article" date="2006" name="Mol. Microbiol.">
        <title>Role of pathogenicity island-associated integrases in the genome plasticity of uropathogenic Escherichia coli strain 536.</title>
        <authorList>
            <person name="Hochhut B."/>
            <person name="Wilde C."/>
            <person name="Balling G."/>
            <person name="Middendorf B."/>
            <person name="Dobrindt U."/>
            <person name="Brzuszkiewicz E."/>
            <person name="Gottschalk G."/>
            <person name="Carniel E."/>
            <person name="Hacker J."/>
        </authorList>
    </citation>
    <scope>NUCLEOTIDE SEQUENCE [LARGE SCALE GENOMIC DNA]</scope>
    <source>
        <strain>536 / UPEC</strain>
    </source>
</reference>
<keyword id="KW-0687">Ribonucleoprotein</keyword>
<keyword id="KW-0689">Ribosomal protein</keyword>
<keyword id="KW-0694">RNA-binding</keyword>
<keyword id="KW-0699">rRNA-binding</keyword>
<sequence>MYAVFQSGGKQHRVSEGQTVRLEKLDIATGETVEFAEVLMIANGEEVKIGVPFVDGGVIKAEVVAHGRGEKVKIVKFRRRKHYRKQQGHRQWFTDVKITGISA</sequence>
<evidence type="ECO:0000255" key="1">
    <source>
        <dbReference type="HAMAP-Rule" id="MF_01363"/>
    </source>
</evidence>
<evidence type="ECO:0000305" key="2"/>